<comment type="function">
    <text evidence="2">Together with the alpha chain CGA constitutes follitropin, the follicle-stimulating hormone, and provides its biological specificity to the hormone heterodimer. Binds FSHR, a G protein-coupled receptor, on target cells to activate downstream signaling pathways. Follitropin is involved in follicle development and spermatogenesis in reproductive organs.</text>
</comment>
<comment type="subunit">
    <text evidence="2">Heterodimer. The active follitropin is a heterodimer composed of an alpha chain/CGA shared with other hormones and a unique beta chain/FSHB shown here.</text>
</comment>
<comment type="subcellular location">
    <subcellularLocation>
        <location evidence="2">Secreted</location>
    </subcellularLocation>
    <text evidence="2">Efficient secretion requires dimerization with CGA.</text>
</comment>
<comment type="similarity">
    <text evidence="3">Belongs to the glycoprotein hormones subunit beta family.</text>
</comment>
<organism>
    <name type="scientific">Capra hircus</name>
    <name type="common">Goat</name>
    <dbReference type="NCBI Taxonomy" id="9925"/>
    <lineage>
        <taxon>Eukaryota</taxon>
        <taxon>Metazoa</taxon>
        <taxon>Chordata</taxon>
        <taxon>Craniata</taxon>
        <taxon>Vertebrata</taxon>
        <taxon>Euteleostomi</taxon>
        <taxon>Mammalia</taxon>
        <taxon>Eutheria</taxon>
        <taxon>Laurasiatheria</taxon>
        <taxon>Artiodactyla</taxon>
        <taxon>Ruminantia</taxon>
        <taxon>Pecora</taxon>
        <taxon>Bovidae</taxon>
        <taxon>Caprinae</taxon>
        <taxon>Capra</taxon>
    </lineage>
</organism>
<evidence type="ECO:0000250" key="1"/>
<evidence type="ECO:0000250" key="2">
    <source>
        <dbReference type="UniProtKB" id="P01225"/>
    </source>
</evidence>
<evidence type="ECO:0000305" key="3"/>
<reference key="1">
    <citation type="submission" date="2002-09" db="EMBL/GenBank/DDBJ databases">
        <title>Nucleotide sequence of cloned cDNA for beta subunit of Cervus nippon follicle stimulating hormone.</title>
        <authorList>
            <person name="Guan H.-B."/>
            <person name="Li Q.-Z."/>
            <person name="Zhang L."/>
        </authorList>
    </citation>
    <scope>NUCLEOTIDE SEQUENCE [MRNA]</scope>
</reference>
<reference key="2">
    <citation type="submission" date="2002-06" db="EMBL/GenBank/DDBJ databases">
        <title>Cloning and DNA sequence analysis of the cDNA for goat follicle stimulating hormone.</title>
        <authorList>
            <person name="Ding J.T."/>
            <person name="Zhang J.Q."/>
            <person name="Sun H.C."/>
            <person name="Jiang X.P."/>
        </authorList>
    </citation>
    <scope>NUCLEOTIDE SEQUENCE [MRNA]</scope>
</reference>
<sequence length="129" mass="14688">MKSVQFCFLFCCWRAICCRSCELTNITITVEKEECSFCISINTTWCAGYCYTRDLVYKDPARPNIQKACTFKELVYETVKVPGCARHADSLYTYPVATECHCGKCDRDSTDCTVRGLGPSYCSFSDIRE</sequence>
<dbReference type="EMBL" id="AY156689">
    <property type="protein sequence ID" value="AAN84783.1"/>
    <property type="molecule type" value="mRNA"/>
</dbReference>
<dbReference type="EMBL" id="AF522070">
    <property type="protein sequence ID" value="AAM81325.1"/>
    <property type="molecule type" value="mRNA"/>
</dbReference>
<dbReference type="RefSeq" id="XP_013825236.2">
    <property type="nucleotide sequence ID" value="XM_013969782.2"/>
</dbReference>
<dbReference type="SMR" id="Q8HY83"/>
<dbReference type="STRING" id="9925.ENSCHIP00000026623"/>
<dbReference type="GlyCosmos" id="Q8HY83">
    <property type="glycosylation" value="2 sites, No reported glycans"/>
</dbReference>
<dbReference type="GeneID" id="100861299"/>
<dbReference type="CTD" id="2488"/>
<dbReference type="OrthoDB" id="8453657at2759"/>
<dbReference type="Proteomes" id="UP000291000">
    <property type="component" value="Unassembled WGS sequence"/>
</dbReference>
<dbReference type="Proteomes" id="UP000694566">
    <property type="component" value="Unplaced"/>
</dbReference>
<dbReference type="GO" id="GO:0005737">
    <property type="term" value="C:cytoplasm"/>
    <property type="evidence" value="ECO:0007669"/>
    <property type="project" value="TreeGrafter"/>
</dbReference>
<dbReference type="GO" id="GO:0005615">
    <property type="term" value="C:extracellular space"/>
    <property type="evidence" value="ECO:0000250"/>
    <property type="project" value="UniProtKB"/>
</dbReference>
<dbReference type="GO" id="GO:0016914">
    <property type="term" value="C:follicle-stimulating hormone complex"/>
    <property type="evidence" value="ECO:0000250"/>
    <property type="project" value="UniProtKB"/>
</dbReference>
<dbReference type="GO" id="GO:0016913">
    <property type="term" value="F:follicle-stimulating hormone activity"/>
    <property type="evidence" value="ECO:0000250"/>
    <property type="project" value="UniProtKB"/>
</dbReference>
<dbReference type="GO" id="GO:0042699">
    <property type="term" value="P:follicle-stimulating hormone signaling pathway"/>
    <property type="evidence" value="ECO:0007669"/>
    <property type="project" value="TreeGrafter"/>
</dbReference>
<dbReference type="GO" id="GO:0007186">
    <property type="term" value="P:G protein-coupled receptor signaling pathway"/>
    <property type="evidence" value="ECO:0000250"/>
    <property type="project" value="UniProtKB"/>
</dbReference>
<dbReference type="GO" id="GO:0010469">
    <property type="term" value="P:regulation of signaling receptor activity"/>
    <property type="evidence" value="ECO:0000250"/>
    <property type="project" value="UniProtKB"/>
</dbReference>
<dbReference type="CDD" id="cd00069">
    <property type="entry name" value="GHB_like"/>
    <property type="match status" value="1"/>
</dbReference>
<dbReference type="FunFam" id="2.10.90.10:FF:000007">
    <property type="entry name" value="Luteinizing hormone beta subunit"/>
    <property type="match status" value="1"/>
</dbReference>
<dbReference type="Gene3D" id="2.10.90.10">
    <property type="entry name" value="Cystine-knot cytokines"/>
    <property type="match status" value="1"/>
</dbReference>
<dbReference type="InterPro" id="IPR029034">
    <property type="entry name" value="Cystine-knot_cytokine"/>
</dbReference>
<dbReference type="InterPro" id="IPR006208">
    <property type="entry name" value="Glyco_hormone_CN"/>
</dbReference>
<dbReference type="InterPro" id="IPR001545">
    <property type="entry name" value="Gonadotropin_bsu"/>
</dbReference>
<dbReference type="InterPro" id="IPR018245">
    <property type="entry name" value="Gonadotropin_bsu_CS"/>
</dbReference>
<dbReference type="PANTHER" id="PTHR11515:SF17">
    <property type="entry name" value="FOLLITROPIN SUBUNIT BETA"/>
    <property type="match status" value="1"/>
</dbReference>
<dbReference type="PANTHER" id="PTHR11515">
    <property type="entry name" value="GLYCOPROTEIN HORMONE BETA CHAIN"/>
    <property type="match status" value="1"/>
</dbReference>
<dbReference type="Pfam" id="PF00007">
    <property type="entry name" value="Cys_knot"/>
    <property type="match status" value="1"/>
</dbReference>
<dbReference type="SMART" id="SM00068">
    <property type="entry name" value="GHB"/>
    <property type="match status" value="1"/>
</dbReference>
<dbReference type="SUPFAM" id="SSF57501">
    <property type="entry name" value="Cystine-knot cytokines"/>
    <property type="match status" value="1"/>
</dbReference>
<dbReference type="PROSITE" id="PS00261">
    <property type="entry name" value="GLYCO_HORMONE_BETA_1"/>
    <property type="match status" value="1"/>
</dbReference>
<dbReference type="PROSITE" id="PS00689">
    <property type="entry name" value="GLYCO_HORMONE_BETA_2"/>
    <property type="match status" value="1"/>
</dbReference>
<accession>Q8HY83</accession>
<accession>Q8MJ51</accession>
<keyword id="KW-1015">Disulfide bond</keyword>
<keyword id="KW-0325">Glycoprotein</keyword>
<keyword id="KW-0372">Hormone</keyword>
<keyword id="KW-1185">Reference proteome</keyword>
<keyword id="KW-0964">Secreted</keyword>
<keyword id="KW-0732">Signal</keyword>
<proteinExistence type="evidence at transcript level"/>
<name>FSHB_CAPHI</name>
<protein>
    <recommendedName>
        <fullName>Follitropin subunit beta</fullName>
    </recommendedName>
    <alternativeName>
        <fullName>Follicle-stimulating hormone beta subunit</fullName>
        <shortName>FSH-B</shortName>
        <shortName>FSH-beta</shortName>
    </alternativeName>
    <alternativeName>
        <fullName>Follitropin beta chain</fullName>
    </alternativeName>
</protein>
<feature type="signal peptide" evidence="1">
    <location>
        <begin position="1"/>
        <end position="18"/>
    </location>
</feature>
<feature type="chain" id="PRO_0000011707" description="Follitropin subunit beta">
    <location>
        <begin position="19"/>
        <end position="129"/>
    </location>
</feature>
<feature type="glycosylation site" description="N-linked (GlcNAc...) asparagine" evidence="2">
    <location>
        <position position="25"/>
    </location>
</feature>
<feature type="glycosylation site" description="N-linked (GlcNAc...) asparagine" evidence="2">
    <location>
        <position position="42"/>
    </location>
</feature>
<feature type="disulfide bond" evidence="2">
    <location>
        <begin position="21"/>
        <end position="69"/>
    </location>
</feature>
<feature type="disulfide bond" evidence="2">
    <location>
        <begin position="35"/>
        <end position="84"/>
    </location>
</feature>
<feature type="disulfide bond" evidence="2">
    <location>
        <begin position="38"/>
        <end position="122"/>
    </location>
</feature>
<feature type="disulfide bond" evidence="2">
    <location>
        <begin position="46"/>
        <end position="100"/>
    </location>
</feature>
<feature type="disulfide bond" evidence="2">
    <location>
        <begin position="50"/>
        <end position="102"/>
    </location>
</feature>
<feature type="disulfide bond" evidence="2">
    <location>
        <begin position="105"/>
        <end position="112"/>
    </location>
</feature>
<feature type="sequence conflict" description="In Ref. 2; AAM81325." evidence="3" ref="2">
    <original>V</original>
    <variation>I</variation>
    <location>
        <position position="4"/>
    </location>
</feature>
<feature type="sequence conflict" description="In Ref. 2; AAM81325." evidence="3" ref="2">
    <original>D</original>
    <variation>E</variation>
    <location>
        <position position="126"/>
    </location>
</feature>
<gene>
    <name type="primary">FSHB</name>
</gene>